<evidence type="ECO:0000255" key="1">
    <source>
        <dbReference type="HAMAP-Rule" id="MF_01656"/>
    </source>
</evidence>
<feature type="chain" id="PRO_0000387898" description="4-hydroxy-2-oxovalerate aldolase 2">
    <location>
        <begin position="1"/>
        <end position="347"/>
    </location>
</feature>
<feature type="domain" description="Pyruvate carboxyltransferase" evidence="1">
    <location>
        <begin position="9"/>
        <end position="259"/>
    </location>
</feature>
<feature type="binding site" evidence="1">
    <location>
        <begin position="17"/>
        <end position="18"/>
    </location>
    <ligand>
        <name>substrate</name>
    </ligand>
</feature>
<feature type="binding site" evidence="1">
    <location>
        <position position="18"/>
    </location>
    <ligand>
        <name>Mn(2+)</name>
        <dbReference type="ChEBI" id="CHEBI:29035"/>
    </ligand>
</feature>
<feature type="binding site" evidence="1">
    <location>
        <position position="171"/>
    </location>
    <ligand>
        <name>substrate</name>
    </ligand>
</feature>
<feature type="binding site" evidence="1">
    <location>
        <position position="198"/>
    </location>
    <ligand>
        <name>Mn(2+)</name>
        <dbReference type="ChEBI" id="CHEBI:29035"/>
    </ligand>
</feature>
<feature type="binding site" evidence="1">
    <location>
        <position position="198"/>
    </location>
    <ligand>
        <name>substrate</name>
    </ligand>
</feature>
<feature type="binding site" evidence="1">
    <location>
        <position position="200"/>
    </location>
    <ligand>
        <name>Mn(2+)</name>
        <dbReference type="ChEBI" id="CHEBI:29035"/>
    </ligand>
</feature>
<feature type="binding site" evidence="1">
    <location>
        <position position="289"/>
    </location>
    <ligand>
        <name>substrate</name>
    </ligand>
</feature>
<feature type="site" description="Transition state stabilizer" evidence="1">
    <location>
        <position position="17"/>
    </location>
</feature>
<proteinExistence type="inferred from homology"/>
<dbReference type="EC" id="4.1.3.39" evidence="1"/>
<dbReference type="EMBL" id="AP011115">
    <property type="protein sequence ID" value="BAH51983.1"/>
    <property type="molecule type" value="Genomic_DNA"/>
</dbReference>
<dbReference type="RefSeq" id="WP_012690922.1">
    <property type="nucleotide sequence ID" value="NC_012522.1"/>
</dbReference>
<dbReference type="SMR" id="C1B8I0"/>
<dbReference type="STRING" id="632772.ROP_37360"/>
<dbReference type="KEGG" id="rop:ROP_37360"/>
<dbReference type="PATRIC" id="fig|632772.20.peg.3925"/>
<dbReference type="HOGENOM" id="CLU_049173_0_0_11"/>
<dbReference type="OrthoDB" id="9803573at2"/>
<dbReference type="Proteomes" id="UP000002212">
    <property type="component" value="Chromosome"/>
</dbReference>
<dbReference type="GO" id="GO:0003852">
    <property type="term" value="F:2-isopropylmalate synthase activity"/>
    <property type="evidence" value="ECO:0007669"/>
    <property type="project" value="TreeGrafter"/>
</dbReference>
<dbReference type="GO" id="GO:0008701">
    <property type="term" value="F:4-hydroxy-2-oxovalerate aldolase activity"/>
    <property type="evidence" value="ECO:0007669"/>
    <property type="project" value="UniProtKB-UniRule"/>
</dbReference>
<dbReference type="GO" id="GO:0030145">
    <property type="term" value="F:manganese ion binding"/>
    <property type="evidence" value="ECO:0007669"/>
    <property type="project" value="UniProtKB-UniRule"/>
</dbReference>
<dbReference type="GO" id="GO:0009056">
    <property type="term" value="P:catabolic process"/>
    <property type="evidence" value="ECO:0007669"/>
    <property type="project" value="UniProtKB-KW"/>
</dbReference>
<dbReference type="GO" id="GO:0009098">
    <property type="term" value="P:L-leucine biosynthetic process"/>
    <property type="evidence" value="ECO:0007669"/>
    <property type="project" value="TreeGrafter"/>
</dbReference>
<dbReference type="CDD" id="cd07943">
    <property type="entry name" value="DRE_TIM_HOA"/>
    <property type="match status" value="1"/>
</dbReference>
<dbReference type="Gene3D" id="1.10.8.60">
    <property type="match status" value="1"/>
</dbReference>
<dbReference type="Gene3D" id="3.20.20.70">
    <property type="entry name" value="Aldolase class I"/>
    <property type="match status" value="1"/>
</dbReference>
<dbReference type="HAMAP" id="MF_01656">
    <property type="entry name" value="HOA"/>
    <property type="match status" value="1"/>
</dbReference>
<dbReference type="InterPro" id="IPR050073">
    <property type="entry name" value="2-IPM_HCS-like"/>
</dbReference>
<dbReference type="InterPro" id="IPR017629">
    <property type="entry name" value="4OH_2_O-val_aldolase"/>
</dbReference>
<dbReference type="InterPro" id="IPR013785">
    <property type="entry name" value="Aldolase_TIM"/>
</dbReference>
<dbReference type="InterPro" id="IPR012425">
    <property type="entry name" value="DmpG_comm"/>
</dbReference>
<dbReference type="InterPro" id="IPR035685">
    <property type="entry name" value="DRE_TIM_HOA"/>
</dbReference>
<dbReference type="InterPro" id="IPR000891">
    <property type="entry name" value="PYR_CT"/>
</dbReference>
<dbReference type="NCBIfam" id="TIGR03217">
    <property type="entry name" value="4OH_2_O_val_ald"/>
    <property type="match status" value="1"/>
</dbReference>
<dbReference type="NCBIfam" id="NF006049">
    <property type="entry name" value="PRK08195.1"/>
    <property type="match status" value="1"/>
</dbReference>
<dbReference type="PANTHER" id="PTHR10277:SF9">
    <property type="entry name" value="2-ISOPROPYLMALATE SYNTHASE 1, CHLOROPLASTIC-RELATED"/>
    <property type="match status" value="1"/>
</dbReference>
<dbReference type="PANTHER" id="PTHR10277">
    <property type="entry name" value="HOMOCITRATE SYNTHASE-RELATED"/>
    <property type="match status" value="1"/>
</dbReference>
<dbReference type="Pfam" id="PF07836">
    <property type="entry name" value="DmpG_comm"/>
    <property type="match status" value="1"/>
</dbReference>
<dbReference type="Pfam" id="PF00682">
    <property type="entry name" value="HMGL-like"/>
    <property type="match status" value="1"/>
</dbReference>
<dbReference type="SUPFAM" id="SSF51569">
    <property type="entry name" value="Aldolase"/>
    <property type="match status" value="1"/>
</dbReference>
<dbReference type="SUPFAM" id="SSF89000">
    <property type="entry name" value="post-HMGL domain-like"/>
    <property type="match status" value="1"/>
</dbReference>
<dbReference type="PROSITE" id="PS50991">
    <property type="entry name" value="PYR_CT"/>
    <property type="match status" value="1"/>
</dbReference>
<gene>
    <name type="ordered locus">ROP_37360</name>
</gene>
<protein>
    <recommendedName>
        <fullName evidence="1">4-hydroxy-2-oxovalerate aldolase 2</fullName>
        <shortName evidence="1">HOA 2</shortName>
        <ecNumber evidence="1">4.1.3.39</ecNumber>
    </recommendedName>
    <alternativeName>
        <fullName evidence="1">4-hydroxy-2-keto-pentanoic acid aldolase 2</fullName>
    </alternativeName>
    <alternativeName>
        <fullName evidence="1">4-hydroxy-2-oxopentanoate aldolase 2</fullName>
    </alternativeName>
</protein>
<accession>C1B8I0</accession>
<organism>
    <name type="scientific">Rhodococcus opacus (strain B4)</name>
    <dbReference type="NCBI Taxonomy" id="632772"/>
    <lineage>
        <taxon>Bacteria</taxon>
        <taxon>Bacillati</taxon>
        <taxon>Actinomycetota</taxon>
        <taxon>Actinomycetes</taxon>
        <taxon>Mycobacteriales</taxon>
        <taxon>Nocardiaceae</taxon>
        <taxon>Rhodococcus</taxon>
    </lineage>
</organism>
<reference key="1">
    <citation type="submission" date="2009-03" db="EMBL/GenBank/DDBJ databases">
        <title>Comparison of the complete genome sequences of Rhodococcus erythropolis PR4 and Rhodococcus opacus B4.</title>
        <authorList>
            <person name="Takarada H."/>
            <person name="Sekine M."/>
            <person name="Hosoyama A."/>
            <person name="Yamada R."/>
            <person name="Fujisawa T."/>
            <person name="Omata S."/>
            <person name="Shimizu A."/>
            <person name="Tsukatani N."/>
            <person name="Tanikawa S."/>
            <person name="Fujita N."/>
            <person name="Harayama S."/>
        </authorList>
    </citation>
    <scope>NUCLEOTIDE SEQUENCE [LARGE SCALE GENOMIC DNA]</scope>
    <source>
        <strain>B4</strain>
    </source>
</reference>
<name>HOA2_RHOOB</name>
<comment type="catalytic activity">
    <reaction evidence="1">
        <text>(S)-4-hydroxy-2-oxopentanoate = acetaldehyde + pyruvate</text>
        <dbReference type="Rhea" id="RHEA:22624"/>
        <dbReference type="ChEBI" id="CHEBI:15343"/>
        <dbReference type="ChEBI" id="CHEBI:15361"/>
        <dbReference type="ChEBI" id="CHEBI:73143"/>
        <dbReference type="EC" id="4.1.3.39"/>
    </reaction>
</comment>
<comment type="similarity">
    <text evidence="1">Belongs to the 4-hydroxy-2-oxovalerate aldolase family.</text>
</comment>
<keyword id="KW-0058">Aromatic hydrocarbons catabolism</keyword>
<keyword id="KW-0456">Lyase</keyword>
<keyword id="KW-0464">Manganese</keyword>
<keyword id="KW-0479">Metal-binding</keyword>
<sequence length="347" mass="36319">MNTPAQKKITIVDTTLRDGMSSVSHQFTPQNVADIARGLDRAGVGTIEVAHGIGLGASSIQYGFAAATDPDYVRAAVDAVENADIAALYVPGIATLAELQKAIDAGIKTVRVAVHCTEADCGQQPVEWAKEQGLTVMTFLMMSHKLDPEPLAEQAAKLDSYGADVVYVVDSAGAMVPRHAGDRVAALRQAISADIGFHAHNNLGVGIANALTAAENGATFIDGSLRGLGASAGNAQTEVLAAAFERAGWDTGVDLFPLIDTAEHIVAPLMKEPQIVDETALILGYAGVYSTFFHPTKRAAKKFGVPARDILMELGRRGVIGGQEDMIIDVASELAGRTYEIPASAAV</sequence>